<accession>Q3AYG5</accession>
<proteinExistence type="inferred from homology"/>
<protein>
    <recommendedName>
        <fullName evidence="1">Tryptophan synthase alpha chain</fullName>
        <ecNumber evidence="1">4.2.1.20</ecNumber>
    </recommendedName>
</protein>
<evidence type="ECO:0000255" key="1">
    <source>
        <dbReference type="HAMAP-Rule" id="MF_00131"/>
    </source>
</evidence>
<keyword id="KW-0028">Amino-acid biosynthesis</keyword>
<keyword id="KW-0057">Aromatic amino acid biosynthesis</keyword>
<keyword id="KW-0456">Lyase</keyword>
<keyword id="KW-1185">Reference proteome</keyword>
<keyword id="KW-0822">Tryptophan biosynthesis</keyword>
<reference key="1">
    <citation type="submission" date="2005-08" db="EMBL/GenBank/DDBJ databases">
        <title>Complete sequence of Synechococcus sp. CC9902.</title>
        <authorList>
            <person name="Copeland A."/>
            <person name="Lucas S."/>
            <person name="Lapidus A."/>
            <person name="Barry K."/>
            <person name="Detter J.C."/>
            <person name="Glavina T."/>
            <person name="Hammon N."/>
            <person name="Israni S."/>
            <person name="Pitluck S."/>
            <person name="Martinez M."/>
            <person name="Schmutz J."/>
            <person name="Larimer F."/>
            <person name="Land M."/>
            <person name="Kyrpides N."/>
            <person name="Ivanova N."/>
            <person name="Richardson P."/>
        </authorList>
    </citation>
    <scope>NUCLEOTIDE SEQUENCE [LARGE SCALE GENOMIC DNA]</scope>
    <source>
        <strain>CC9902</strain>
    </source>
</reference>
<organism>
    <name type="scientific">Synechococcus sp. (strain CC9902)</name>
    <dbReference type="NCBI Taxonomy" id="316279"/>
    <lineage>
        <taxon>Bacteria</taxon>
        <taxon>Bacillati</taxon>
        <taxon>Cyanobacteriota</taxon>
        <taxon>Cyanophyceae</taxon>
        <taxon>Synechococcales</taxon>
        <taxon>Synechococcaceae</taxon>
        <taxon>Synechococcus</taxon>
    </lineage>
</organism>
<feature type="chain" id="PRO_1000018300" description="Tryptophan synthase alpha chain">
    <location>
        <begin position="1"/>
        <end position="269"/>
    </location>
</feature>
<feature type="active site" description="Proton acceptor" evidence="1">
    <location>
        <position position="54"/>
    </location>
</feature>
<feature type="active site" description="Proton acceptor" evidence="1">
    <location>
        <position position="65"/>
    </location>
</feature>
<dbReference type="EC" id="4.2.1.20" evidence="1"/>
<dbReference type="EMBL" id="CP000097">
    <property type="protein sequence ID" value="ABB25862.1"/>
    <property type="molecule type" value="Genomic_DNA"/>
</dbReference>
<dbReference type="RefSeq" id="WP_011359698.1">
    <property type="nucleotide sequence ID" value="NC_007513.1"/>
</dbReference>
<dbReference type="SMR" id="Q3AYG5"/>
<dbReference type="STRING" id="316279.Syncc9902_0896"/>
<dbReference type="KEGG" id="sye:Syncc9902_0896"/>
<dbReference type="eggNOG" id="COG0159">
    <property type="taxonomic scope" value="Bacteria"/>
</dbReference>
<dbReference type="HOGENOM" id="CLU_016734_0_2_3"/>
<dbReference type="OrthoDB" id="9804578at2"/>
<dbReference type="UniPathway" id="UPA00035">
    <property type="reaction ID" value="UER00044"/>
</dbReference>
<dbReference type="Proteomes" id="UP000002712">
    <property type="component" value="Chromosome"/>
</dbReference>
<dbReference type="GO" id="GO:0005829">
    <property type="term" value="C:cytosol"/>
    <property type="evidence" value="ECO:0007669"/>
    <property type="project" value="TreeGrafter"/>
</dbReference>
<dbReference type="GO" id="GO:0004834">
    <property type="term" value="F:tryptophan synthase activity"/>
    <property type="evidence" value="ECO:0007669"/>
    <property type="project" value="UniProtKB-UniRule"/>
</dbReference>
<dbReference type="CDD" id="cd04724">
    <property type="entry name" value="Tryptophan_synthase_alpha"/>
    <property type="match status" value="1"/>
</dbReference>
<dbReference type="FunFam" id="3.20.20.70:FF:000037">
    <property type="entry name" value="Tryptophan synthase alpha chain"/>
    <property type="match status" value="1"/>
</dbReference>
<dbReference type="Gene3D" id="3.20.20.70">
    <property type="entry name" value="Aldolase class I"/>
    <property type="match status" value="1"/>
</dbReference>
<dbReference type="HAMAP" id="MF_00131">
    <property type="entry name" value="Trp_synth_alpha"/>
    <property type="match status" value="1"/>
</dbReference>
<dbReference type="InterPro" id="IPR013785">
    <property type="entry name" value="Aldolase_TIM"/>
</dbReference>
<dbReference type="InterPro" id="IPR011060">
    <property type="entry name" value="RibuloseP-bd_barrel"/>
</dbReference>
<dbReference type="InterPro" id="IPR018204">
    <property type="entry name" value="Trp_synthase_alpha_AS"/>
</dbReference>
<dbReference type="InterPro" id="IPR002028">
    <property type="entry name" value="Trp_synthase_suA"/>
</dbReference>
<dbReference type="NCBIfam" id="TIGR00262">
    <property type="entry name" value="trpA"/>
    <property type="match status" value="1"/>
</dbReference>
<dbReference type="PANTHER" id="PTHR43406:SF1">
    <property type="entry name" value="TRYPTOPHAN SYNTHASE ALPHA CHAIN, CHLOROPLASTIC"/>
    <property type="match status" value="1"/>
</dbReference>
<dbReference type="PANTHER" id="PTHR43406">
    <property type="entry name" value="TRYPTOPHAN SYNTHASE, ALPHA CHAIN"/>
    <property type="match status" value="1"/>
</dbReference>
<dbReference type="Pfam" id="PF00290">
    <property type="entry name" value="Trp_syntA"/>
    <property type="match status" value="1"/>
</dbReference>
<dbReference type="SUPFAM" id="SSF51366">
    <property type="entry name" value="Ribulose-phoshate binding barrel"/>
    <property type="match status" value="1"/>
</dbReference>
<dbReference type="PROSITE" id="PS00167">
    <property type="entry name" value="TRP_SYNTHASE_ALPHA"/>
    <property type="match status" value="1"/>
</dbReference>
<comment type="function">
    <text evidence="1">The alpha subunit is responsible for the aldol cleavage of indoleglycerol phosphate to indole and glyceraldehyde 3-phosphate.</text>
</comment>
<comment type="catalytic activity">
    <reaction evidence="1">
        <text>(1S,2R)-1-C-(indol-3-yl)glycerol 3-phosphate + L-serine = D-glyceraldehyde 3-phosphate + L-tryptophan + H2O</text>
        <dbReference type="Rhea" id="RHEA:10532"/>
        <dbReference type="ChEBI" id="CHEBI:15377"/>
        <dbReference type="ChEBI" id="CHEBI:33384"/>
        <dbReference type="ChEBI" id="CHEBI:57912"/>
        <dbReference type="ChEBI" id="CHEBI:58866"/>
        <dbReference type="ChEBI" id="CHEBI:59776"/>
        <dbReference type="EC" id="4.2.1.20"/>
    </reaction>
</comment>
<comment type="pathway">
    <text evidence="1">Amino-acid biosynthesis; L-tryptophan biosynthesis; L-tryptophan from chorismate: step 5/5.</text>
</comment>
<comment type="subunit">
    <text evidence="1">Tetramer of two alpha and two beta chains.</text>
</comment>
<comment type="similarity">
    <text evidence="1">Belongs to the TrpA family.</text>
</comment>
<name>TRPA_SYNS9</name>
<gene>
    <name evidence="1" type="primary">trpA</name>
    <name type="ordered locus">Syncc9902_0896</name>
</gene>
<sequence>MSSQQSSSIALRFEQLKREGRMALMPFLMAGDPDLSVTAEVLLSLQAAGADMVELGMPYSDPLADGPVIQAAAARALAAGTTPKKVLEMLSSLRGQLSIPVILFTYSNPLLNVGMERFCEQAAEAGASGLVVPDLPLEEAERLSPIAEREGLDLVLLVAPTTPTERMGRIAQSSRGFTYLVSVTGVTGERSTMETRVEGLVQALKQSSPVPVAVGFGISGVDQVRQVRSWGADGAIVGSALVKRMASASLGSVAAEAGLFCSELRKAAD</sequence>